<dbReference type="EC" id="4.2.3.-" evidence="3"/>
<dbReference type="EMBL" id="MG696753">
    <property type="protein sequence ID" value="AUT77125.1"/>
    <property type="molecule type" value="mRNA"/>
</dbReference>
<dbReference type="SMR" id="A0A2K9RFZ9"/>
<dbReference type="UniPathway" id="UPA00213"/>
<dbReference type="GO" id="GO:0009507">
    <property type="term" value="C:chloroplast"/>
    <property type="evidence" value="ECO:0007669"/>
    <property type="project" value="UniProtKB-SubCell"/>
</dbReference>
<dbReference type="GO" id="GO:0062202">
    <property type="term" value="F:Labd-13(16),14-diene-9-ol synthase activity"/>
    <property type="evidence" value="ECO:0000314"/>
    <property type="project" value="UniProtKB"/>
</dbReference>
<dbReference type="GO" id="GO:0000287">
    <property type="term" value="F:magnesium ion binding"/>
    <property type="evidence" value="ECO:0007669"/>
    <property type="project" value="InterPro"/>
</dbReference>
<dbReference type="GO" id="GO:0106243">
    <property type="term" value="F:syn-isopimara-7,15-diene synthase activity"/>
    <property type="evidence" value="ECO:0000314"/>
    <property type="project" value="UniProtKB"/>
</dbReference>
<dbReference type="GO" id="GO:0010333">
    <property type="term" value="F:terpene synthase activity"/>
    <property type="evidence" value="ECO:0007669"/>
    <property type="project" value="InterPro"/>
</dbReference>
<dbReference type="GO" id="GO:0009686">
    <property type="term" value="P:gibberellin biosynthetic process"/>
    <property type="evidence" value="ECO:0007669"/>
    <property type="project" value="TreeGrafter"/>
</dbReference>
<dbReference type="FunFam" id="1.10.600.10:FF:000005">
    <property type="entry name" value="Ent-kaur-16-ene synthase, chloroplastic"/>
    <property type="match status" value="1"/>
</dbReference>
<dbReference type="Gene3D" id="1.10.600.10">
    <property type="entry name" value="Farnesyl Diphosphate Synthase"/>
    <property type="match status" value="1"/>
</dbReference>
<dbReference type="Gene3D" id="1.50.10.130">
    <property type="entry name" value="Terpene synthase, N-terminal domain"/>
    <property type="match status" value="1"/>
</dbReference>
<dbReference type="InterPro" id="IPR008949">
    <property type="entry name" value="Isoprenoid_synthase_dom_sf"/>
</dbReference>
<dbReference type="InterPro" id="IPR001906">
    <property type="entry name" value="Terpene_synth_N"/>
</dbReference>
<dbReference type="InterPro" id="IPR036965">
    <property type="entry name" value="Terpene_synth_N_sf"/>
</dbReference>
<dbReference type="InterPro" id="IPR050148">
    <property type="entry name" value="Terpene_synthase-like"/>
</dbReference>
<dbReference type="InterPro" id="IPR005630">
    <property type="entry name" value="Terpene_synthase_metal-bd"/>
</dbReference>
<dbReference type="InterPro" id="IPR008930">
    <property type="entry name" value="Terpenoid_cyclase/PrenylTrfase"/>
</dbReference>
<dbReference type="PANTHER" id="PTHR31739:SF33">
    <property type="entry name" value="CIS-ABIENOL SYNTHASE, CHLOROPLASTIC"/>
    <property type="match status" value="1"/>
</dbReference>
<dbReference type="PANTHER" id="PTHR31739">
    <property type="entry name" value="ENT-COPALYL DIPHOSPHATE SYNTHASE, CHLOROPLASTIC"/>
    <property type="match status" value="1"/>
</dbReference>
<dbReference type="Pfam" id="PF01397">
    <property type="entry name" value="Terpene_synth"/>
    <property type="match status" value="1"/>
</dbReference>
<dbReference type="Pfam" id="PF03936">
    <property type="entry name" value="Terpene_synth_C"/>
    <property type="match status" value="1"/>
</dbReference>
<dbReference type="SUPFAM" id="SSF48239">
    <property type="entry name" value="Terpenoid cyclases/Protein prenyltransferases"/>
    <property type="match status" value="1"/>
</dbReference>
<dbReference type="SUPFAM" id="SSF48576">
    <property type="entry name" value="Terpenoid synthases"/>
    <property type="match status" value="1"/>
</dbReference>
<gene>
    <name evidence="4" type="primary">TPS6</name>
</gene>
<feature type="chain" id="PRO_0000449312" description="Class I diterpene synthase TPS6, chloroplastic">
    <location>
        <begin position="1"/>
        <end position="594"/>
    </location>
</feature>
<feature type="short sequence motif" description="DDXXD motif" evidence="1">
    <location>
        <begin position="330"/>
        <end position="334"/>
    </location>
</feature>
<feature type="binding site" evidence="2">
    <location>
        <position position="330"/>
    </location>
    <ligand>
        <name>Mg(2+)</name>
        <dbReference type="ChEBI" id="CHEBI:18420"/>
        <label>1</label>
    </ligand>
</feature>
<feature type="binding site" evidence="2">
    <location>
        <position position="330"/>
    </location>
    <ligand>
        <name>Mg(2+)</name>
        <dbReference type="ChEBI" id="CHEBI:18420"/>
        <label>2</label>
    </ligand>
</feature>
<feature type="binding site" evidence="2">
    <location>
        <position position="334"/>
    </location>
    <ligand>
        <name>Mg(2+)</name>
        <dbReference type="ChEBI" id="CHEBI:18420"/>
        <label>1</label>
    </ligand>
</feature>
<feature type="binding site" evidence="2">
    <location>
        <position position="334"/>
    </location>
    <ligand>
        <name>Mg(2+)</name>
        <dbReference type="ChEBI" id="CHEBI:18420"/>
        <label>2</label>
    </ligand>
</feature>
<feature type="binding site" evidence="2">
    <location>
        <position position="474"/>
    </location>
    <ligand>
        <name>Mg(2+)</name>
        <dbReference type="ChEBI" id="CHEBI:18420"/>
        <label>3</label>
    </ligand>
</feature>
<feature type="binding site" evidence="2">
    <location>
        <position position="477"/>
    </location>
    <ligand>
        <name>Mg(2+)</name>
        <dbReference type="ChEBI" id="CHEBI:18420"/>
        <label>3</label>
    </ligand>
</feature>
<feature type="binding site" evidence="2">
    <location>
        <position position="482"/>
    </location>
    <ligand>
        <name>Mg(2+)</name>
        <dbReference type="ChEBI" id="CHEBI:18420"/>
        <label>3</label>
    </ligand>
</feature>
<reference key="1">
    <citation type="journal article" date="2018" name="Plant J.">
        <title>Biosynthesis of bioactive diterpenoids in the medicinal plant Vitex agnus-castus.</title>
        <authorList>
            <person name="Heskes A.M."/>
            <person name="Sundram T.C.M."/>
            <person name="Boughton B.A."/>
            <person name="Jensen N.B."/>
            <person name="Hansen N.L."/>
            <person name="Crocoll C."/>
            <person name="Cozzi F."/>
            <person name="Rasmussen S."/>
            <person name="Hamberger B."/>
            <person name="Hamberger B."/>
            <person name="Staerk D."/>
            <person name="Moeller B.L."/>
            <person name="Pateraki I."/>
        </authorList>
    </citation>
    <scope>NUCLEOTIDE SEQUENCE [MRNA]</scope>
    <scope>FUNCTION</scope>
    <scope>CATALYTIC ACTIVITY</scope>
    <scope>PATHWAY</scope>
    <scope>TISSUE SPECIFICITY</scope>
    <source>
        <tissue>Fruit</tissue>
        <tissue>Leaf</tissue>
        <tissue>Trichome gland</tissue>
    </source>
</reference>
<reference key="2">
    <citation type="journal article" date="2003" name="Phytomedicine">
        <title>Chaste tree (Vitex agnus-castus)--pharmacology and clinical indications.</title>
        <authorList>
            <person name="Wuttke W."/>
            <person name="Jarry H."/>
            <person name="Christoffel V."/>
            <person name="Spengler B."/>
            <person name="Seidlova-Wuttke D."/>
        </authorList>
    </citation>
    <scope>REVIEW ON MENSTRUAL CYCLE DISORDERS</scope>
</reference>
<reference key="3">
    <citation type="journal article" date="2019" name="Nat. Prod. Rep.">
        <title>Non-volatile natural products in plant glandular trichomes: chemistry, biological activities and biosynthesis.</title>
        <authorList>
            <person name="Liu Y."/>
            <person name="Jing S.-X."/>
            <person name="Luo S.-H."/>
            <person name="Li S.-H."/>
        </authorList>
    </citation>
    <scope>PATHWAY</scope>
    <scope>REVIEW</scope>
</reference>
<evidence type="ECO:0000250" key="1">
    <source>
        <dbReference type="UniProtKB" id="G8GJ94"/>
    </source>
</evidence>
<evidence type="ECO:0000250" key="2">
    <source>
        <dbReference type="UniProtKB" id="Q40577"/>
    </source>
</evidence>
<evidence type="ECO:0000269" key="3">
    <source>
    </source>
</evidence>
<evidence type="ECO:0000303" key="4">
    <source>
    </source>
</evidence>
<evidence type="ECO:0000305" key="5"/>
<evidence type="ECO:0000305" key="6">
    <source>
    </source>
</evidence>
<evidence type="ECO:0000305" key="7">
    <source>
    </source>
</evidence>
<evidence type="ECO:0000305" key="8">
    <source>
    </source>
</evidence>
<keyword id="KW-0150">Chloroplast</keyword>
<keyword id="KW-0456">Lyase</keyword>
<keyword id="KW-0460">Magnesium</keyword>
<keyword id="KW-0479">Metal-binding</keyword>
<keyword id="KW-0934">Plastid</keyword>
<protein>
    <recommendedName>
        <fullName evidence="4">Class I diterpene synthase TPS6, chloroplastic</fullName>
    </recommendedName>
    <alternativeName>
        <fullName evidence="4">Labd-13(16),14-diene-9-ol synthase</fullName>
        <ecNumber evidence="3">4.2.3.-</ecNumber>
    </alternativeName>
    <alternativeName>
        <fullName evidence="4">Syn-isopimara-7,15-diene synthase</fullName>
        <ecNumber evidence="3">4.2.3.-</ecNumber>
    </alternativeName>
    <alternativeName>
        <fullName evidence="4">Terpene synthase 6</fullName>
        <shortName evidence="4">VacTPS6</shortName>
    </alternativeName>
</protein>
<proteinExistence type="evidence at protein level"/>
<sequence>MSLRFNLIVTPFSNYEIRNRRETFPVQKFLMTTSKSAIKVKCSLKTSIDLVGKIREKINGKVDNSLEVPTINYLVDIPSNLCMIDSLERLGVARYFQSEIDGVLEKTYRLWQQREKDIFADVTCRAMAFRFLRVKGYEVSSDELAPYADQVHVNPQISDVTTVVELYRASQVRIYEEDSILEKLHAWTSTFLKQQLQSKTISDKKLHEQVEYYLKNYHGIQNQVAVRRSLDLYDIDHYPILKVADRFRIIYNEDFFVFLRQDFNLCQAQHQKELQQLQRWYEDCRLDTLNYGRNVVHVSCFLAAANFGDPELSNARLAFAKTIVLVTRIDDFFDLAGSREESYKILELVKEWKEKPTEDYGSKEVEILFTALYDTVNEFAEIAYIEQGRCVKPLLIKLWVELLTSFKKELDSWTDDTALTLDEYLSSAWMSIACRVCTLTALQFLGVKLSEEMLSSQECTDLCRHLSFVNRLLNDVQTFERERKENTINAVSVLLAAHRHERAITEEEAISKIQEIVEQNRRKLMRMVYQRESVFPRKCRNVFLEVSKMGHYLYASGDELTTPQQLMEDMKSLVFEPLALHPLETNNVIASGKN</sequence>
<accession>A0A2K9RFZ9</accession>
<organism>
    <name type="scientific">Vitex agnus-castus</name>
    <name type="common">Chaste tree</name>
    <dbReference type="NCBI Taxonomy" id="54477"/>
    <lineage>
        <taxon>Eukaryota</taxon>
        <taxon>Viridiplantae</taxon>
        <taxon>Streptophyta</taxon>
        <taxon>Embryophyta</taxon>
        <taxon>Tracheophyta</taxon>
        <taxon>Spermatophyta</taxon>
        <taxon>Magnoliopsida</taxon>
        <taxon>eudicotyledons</taxon>
        <taxon>Gunneridae</taxon>
        <taxon>Pentapetalae</taxon>
        <taxon>asterids</taxon>
        <taxon>lamiids</taxon>
        <taxon>Lamiales</taxon>
        <taxon>Lamiaceae</taxon>
        <taxon>Viticoideae</taxon>
        <taxon>Vitex</taxon>
    </lineage>
</organism>
<comment type="function">
    <text evidence="3 6 7 8">Involved in the biosynthesis of labdane-type diterpenoid including cleroda-dienols, and peregrinol lactones and furan derivatives, dopaminergic diterpenoids that can bind to dopamine receptors in the human pituitary gland, have probably ability to lower prolactin levels, and are used to treat menstrual cycle disorders (e.g. premenstrual syndrome and mastodynia) (Probable). Terpene synthase the catalyzes the conversion of peregrinol diphosphate to labda-13(16),14-dien-9-ol, and of syn-copalyl diphosophate to dehydroabietadiene and syn-isopimara-7,15-diene (PubMed:29315936).</text>
</comment>
<comment type="catalytic activity">
    <reaction evidence="3">
        <text>peregrinol diphosphate = labd-13(16),14-diene-9-ol + diphosphate</text>
        <dbReference type="Rhea" id="RHEA:62184"/>
        <dbReference type="ChEBI" id="CHEBI:33019"/>
        <dbReference type="ChEBI" id="CHEBI:138232"/>
        <dbReference type="ChEBI" id="CHEBI:145549"/>
    </reaction>
    <physiologicalReaction direction="left-to-right" evidence="3">
        <dbReference type="Rhea" id="RHEA:62185"/>
    </physiologicalReaction>
</comment>
<comment type="catalytic activity">
    <reaction evidence="3">
        <text>9alpha-copalyl diphosphate = syn-isopimara-7,15-diene + diphosphate</text>
        <dbReference type="Rhea" id="RHEA:62188"/>
        <dbReference type="ChEBI" id="CHEBI:33019"/>
        <dbReference type="ChEBI" id="CHEBI:58622"/>
        <dbReference type="ChEBI" id="CHEBI:145566"/>
    </reaction>
    <physiologicalReaction direction="left-to-right" evidence="3">
        <dbReference type="Rhea" id="RHEA:62189"/>
    </physiologicalReaction>
</comment>
<comment type="cofactor">
    <cofactor evidence="2">
        <name>Mg(2+)</name>
        <dbReference type="ChEBI" id="CHEBI:18420"/>
    </cofactor>
    <text evidence="2">Binds 3 Mg(2+) ions per subunit.</text>
</comment>
<comment type="pathway">
    <text evidence="7 8">Secondary metabolite biosynthesis; terpenoid biosynthesis.</text>
</comment>
<comment type="subcellular location">
    <subcellularLocation>
        <location evidence="7">Plastid</location>
        <location evidence="7">Chloroplast</location>
    </subcellularLocation>
</comment>
<comment type="tissue specificity">
    <text evidence="3">Mostly expressed in trichomes of leaves and fruits.</text>
</comment>
<comment type="domain">
    <text evidence="1">The Asp-Asp-Xaa-Xaa-Asp/Glu (DDXXD/E) motif is important for the catalytic activity, presumably through binding to Mg(2+).</text>
</comment>
<comment type="similarity">
    <text evidence="5">Belongs to the terpene synthase family.</text>
</comment>
<name>TPS6_VITAC</name>